<dbReference type="EMBL" id="AY166699">
    <property type="status" value="NOT_ANNOTATED_CDS"/>
    <property type="molecule type" value="mRNA"/>
</dbReference>
<dbReference type="EMBL" id="AC142169">
    <property type="status" value="NOT_ANNOTATED_CDS"/>
    <property type="molecule type" value="Genomic_DNA"/>
</dbReference>
<dbReference type="EMBL" id="CH236954">
    <property type="protein sequence ID" value="EAL23907.1"/>
    <property type="molecule type" value="Genomic_DNA"/>
</dbReference>
<dbReference type="BioMuta" id="BLACE"/>
<dbReference type="MassIVE" id="A4D250"/>
<dbReference type="PaxDb" id="9606-ENSP00000367360"/>
<dbReference type="UCSC" id="uc033aqq.2">
    <property type="organism name" value="human"/>
</dbReference>
<dbReference type="AGR" id="HGNC:20484"/>
<dbReference type="GeneCards" id="BLACE"/>
<dbReference type="HGNC" id="HGNC:20484">
    <property type="gene designation" value="BLACE"/>
</dbReference>
<dbReference type="neXtProt" id="NX_A4D250"/>
<dbReference type="eggNOG" id="ENOG502TDKH">
    <property type="taxonomic scope" value="Eukaryota"/>
</dbReference>
<dbReference type="HOGENOM" id="CLU_1502992_0_0_1"/>
<dbReference type="InParanoid" id="A4D250"/>
<dbReference type="PAN-GO" id="A4D250">
    <property type="GO annotations" value="0 GO annotations based on evolutionary models"/>
</dbReference>
<dbReference type="PhylomeDB" id="A4D250"/>
<dbReference type="SignaLink" id="A4D250"/>
<dbReference type="Pharos" id="A4D250">
    <property type="development level" value="Tdark"/>
</dbReference>
<dbReference type="PRO" id="PR:A4D250"/>
<dbReference type="Proteomes" id="UP000005640">
    <property type="component" value="Unplaced"/>
</dbReference>
<dbReference type="RNAct" id="A4D250">
    <property type="molecule type" value="protein"/>
</dbReference>
<gene>
    <name type="primary">BLACE</name>
</gene>
<keyword id="KW-1185">Reference proteome</keyword>
<accession>A4D250</accession>
<protein>
    <recommendedName>
        <fullName>B-cell acute lymphoblastic leukemia-expressed protein</fullName>
    </recommendedName>
</protein>
<proteinExistence type="evidence at transcript level"/>
<name>BLACE_HUMAN</name>
<evidence type="ECO:0000256" key="1">
    <source>
        <dbReference type="SAM" id="MobiDB-lite"/>
    </source>
</evidence>
<evidence type="ECO:0000305" key="2"/>
<organism>
    <name type="scientific">Homo sapiens</name>
    <name type="common">Human</name>
    <dbReference type="NCBI Taxonomy" id="9606"/>
    <lineage>
        <taxon>Eukaryota</taxon>
        <taxon>Metazoa</taxon>
        <taxon>Chordata</taxon>
        <taxon>Craniata</taxon>
        <taxon>Vertebrata</taxon>
        <taxon>Euteleostomi</taxon>
        <taxon>Mammalia</taxon>
        <taxon>Eutheria</taxon>
        <taxon>Euarchontoglires</taxon>
        <taxon>Primates</taxon>
        <taxon>Haplorrhini</taxon>
        <taxon>Catarrhini</taxon>
        <taxon>Hominidae</taxon>
        <taxon>Homo</taxon>
    </lineage>
</organism>
<feature type="chain" id="PRO_0000411092" description="B-cell acute lymphoblastic leukemia-expressed protein">
    <location>
        <begin position="1"/>
        <end position="179"/>
    </location>
</feature>
<feature type="region of interest" description="Disordered" evidence="1">
    <location>
        <begin position="1"/>
        <end position="20"/>
    </location>
</feature>
<feature type="region of interest" description="Disordered" evidence="1">
    <location>
        <begin position="65"/>
        <end position="86"/>
    </location>
</feature>
<feature type="compositionally biased region" description="Polar residues" evidence="1">
    <location>
        <begin position="10"/>
        <end position="20"/>
    </location>
</feature>
<comment type="sequence caution" evidence="2">
    <conflict type="frameshift">
        <sequence resource="EMBL" id="AY166699"/>
    </conflict>
</comment>
<reference key="1">
    <citation type="journal article" date="2004" name="Genomics">
        <title>A gene expressed exclusively in acute B lymphoblastic leukemias.</title>
        <authorList>
            <person name="Vialle-Castellano A."/>
            <person name="Laduron S."/>
            <person name="De Plaen E."/>
            <person name="Jost E."/>
            <person name="Dupont S."/>
            <person name="Ameye G."/>
            <person name="Michaux L."/>
            <person name="Coulie P."/>
            <person name="Olive D."/>
            <person name="Boon T."/>
            <person name="van Baren N."/>
        </authorList>
    </citation>
    <scope>NUCLEOTIDE SEQUENCE [MRNA]</scope>
</reference>
<reference key="2">
    <citation type="journal article" date="2003" name="Nature">
        <title>The DNA sequence of human chromosome 7.</title>
        <authorList>
            <person name="Hillier L.W."/>
            <person name="Fulton R.S."/>
            <person name="Fulton L.A."/>
            <person name="Graves T.A."/>
            <person name="Pepin K.H."/>
            <person name="Wagner-McPherson C."/>
            <person name="Layman D."/>
            <person name="Maas J."/>
            <person name="Jaeger S."/>
            <person name="Walker R."/>
            <person name="Wylie K."/>
            <person name="Sekhon M."/>
            <person name="Becker M.C."/>
            <person name="O'Laughlin M.D."/>
            <person name="Schaller M.E."/>
            <person name="Fewell G.A."/>
            <person name="Delehaunty K.D."/>
            <person name="Miner T.L."/>
            <person name="Nash W.E."/>
            <person name="Cordes M."/>
            <person name="Du H."/>
            <person name="Sun H."/>
            <person name="Edwards J."/>
            <person name="Bradshaw-Cordum H."/>
            <person name="Ali J."/>
            <person name="Andrews S."/>
            <person name="Isak A."/>
            <person name="Vanbrunt A."/>
            <person name="Nguyen C."/>
            <person name="Du F."/>
            <person name="Lamar B."/>
            <person name="Courtney L."/>
            <person name="Kalicki J."/>
            <person name="Ozersky P."/>
            <person name="Bielicki L."/>
            <person name="Scott K."/>
            <person name="Holmes A."/>
            <person name="Harkins R."/>
            <person name="Harris A."/>
            <person name="Strong C.M."/>
            <person name="Hou S."/>
            <person name="Tomlinson C."/>
            <person name="Dauphin-Kohlberg S."/>
            <person name="Kozlowicz-Reilly A."/>
            <person name="Leonard S."/>
            <person name="Rohlfing T."/>
            <person name="Rock S.M."/>
            <person name="Tin-Wollam A.-M."/>
            <person name="Abbott A."/>
            <person name="Minx P."/>
            <person name="Maupin R."/>
            <person name="Strowmatt C."/>
            <person name="Latreille P."/>
            <person name="Miller N."/>
            <person name="Johnson D."/>
            <person name="Murray J."/>
            <person name="Woessner J.P."/>
            <person name="Wendl M.C."/>
            <person name="Yang S.-P."/>
            <person name="Schultz B.R."/>
            <person name="Wallis J.W."/>
            <person name="Spieth J."/>
            <person name="Bieri T.A."/>
            <person name="Nelson J.O."/>
            <person name="Berkowicz N."/>
            <person name="Wohldmann P.E."/>
            <person name="Cook L.L."/>
            <person name="Hickenbotham M.T."/>
            <person name="Eldred J."/>
            <person name="Williams D."/>
            <person name="Bedell J.A."/>
            <person name="Mardis E.R."/>
            <person name="Clifton S.W."/>
            <person name="Chissoe S.L."/>
            <person name="Marra M.A."/>
            <person name="Raymond C."/>
            <person name="Haugen E."/>
            <person name="Gillett W."/>
            <person name="Zhou Y."/>
            <person name="James R."/>
            <person name="Phelps K."/>
            <person name="Iadanoto S."/>
            <person name="Bubb K."/>
            <person name="Simms E."/>
            <person name="Levy R."/>
            <person name="Clendenning J."/>
            <person name="Kaul R."/>
            <person name="Kent W.J."/>
            <person name="Furey T.S."/>
            <person name="Baertsch R.A."/>
            <person name="Brent M.R."/>
            <person name="Keibler E."/>
            <person name="Flicek P."/>
            <person name="Bork P."/>
            <person name="Suyama M."/>
            <person name="Bailey J.A."/>
            <person name="Portnoy M.E."/>
            <person name="Torrents D."/>
            <person name="Chinwalla A.T."/>
            <person name="Gish W.R."/>
            <person name="Eddy S.R."/>
            <person name="McPherson J.D."/>
            <person name="Olson M.V."/>
            <person name="Eichler E.E."/>
            <person name="Green E.D."/>
            <person name="Waterston R.H."/>
            <person name="Wilson R.K."/>
        </authorList>
    </citation>
    <scope>NUCLEOTIDE SEQUENCE [LARGE SCALE GENOMIC DNA]</scope>
</reference>
<reference key="3">
    <citation type="journal article" date="2003" name="Science">
        <title>Human chromosome 7: DNA sequence and biology.</title>
        <authorList>
            <person name="Scherer S.W."/>
            <person name="Cheung J."/>
            <person name="MacDonald J.R."/>
            <person name="Osborne L.R."/>
            <person name="Nakabayashi K."/>
            <person name="Herbrick J.-A."/>
            <person name="Carson A.R."/>
            <person name="Parker-Katiraee L."/>
            <person name="Skaug J."/>
            <person name="Khaja R."/>
            <person name="Zhang J."/>
            <person name="Hudek A.K."/>
            <person name="Li M."/>
            <person name="Haddad M."/>
            <person name="Duggan G.E."/>
            <person name="Fernandez B.A."/>
            <person name="Kanematsu E."/>
            <person name="Gentles S."/>
            <person name="Christopoulos C.C."/>
            <person name="Choufani S."/>
            <person name="Kwasnicka D."/>
            <person name="Zheng X.H."/>
            <person name="Lai Z."/>
            <person name="Nusskern D.R."/>
            <person name="Zhang Q."/>
            <person name="Gu Z."/>
            <person name="Lu F."/>
            <person name="Zeesman S."/>
            <person name="Nowaczyk M.J."/>
            <person name="Teshima I."/>
            <person name="Chitayat D."/>
            <person name="Shuman C."/>
            <person name="Weksberg R."/>
            <person name="Zackai E.H."/>
            <person name="Grebe T.A."/>
            <person name="Cox S.R."/>
            <person name="Kirkpatrick S.J."/>
            <person name="Rahman N."/>
            <person name="Friedman J.M."/>
            <person name="Heng H.H.Q."/>
            <person name="Pelicci P.G."/>
            <person name="Lo-Coco F."/>
            <person name="Belloni E."/>
            <person name="Shaffer L.G."/>
            <person name="Pober B."/>
            <person name="Morton C.C."/>
            <person name="Gusella J.F."/>
            <person name="Bruns G.A.P."/>
            <person name="Korf B.R."/>
            <person name="Quade B.J."/>
            <person name="Ligon A.H."/>
            <person name="Ferguson H."/>
            <person name="Higgins A.W."/>
            <person name="Leach N.T."/>
            <person name="Herrick S.R."/>
            <person name="Lemyre E."/>
            <person name="Farra C.G."/>
            <person name="Kim H.-G."/>
            <person name="Summers A.M."/>
            <person name="Gripp K.W."/>
            <person name="Roberts W."/>
            <person name="Szatmari P."/>
            <person name="Winsor E.J.T."/>
            <person name="Grzeschik K.-H."/>
            <person name="Teebi A."/>
            <person name="Minassian B.A."/>
            <person name="Kere J."/>
            <person name="Armengol L."/>
            <person name="Pujana M.A."/>
            <person name="Estivill X."/>
            <person name="Wilson M.D."/>
            <person name="Koop B.F."/>
            <person name="Tosi S."/>
            <person name="Moore G.E."/>
            <person name="Boright A.P."/>
            <person name="Zlotorynski E."/>
            <person name="Kerem B."/>
            <person name="Kroisel P.M."/>
            <person name="Petek E."/>
            <person name="Oscier D.G."/>
            <person name="Mould S.J."/>
            <person name="Doehner H."/>
            <person name="Doehner K."/>
            <person name="Rommens J.M."/>
            <person name="Vincent J.B."/>
            <person name="Venter J.C."/>
            <person name="Li P.W."/>
            <person name="Mural R.J."/>
            <person name="Adams M.D."/>
            <person name="Tsui L.-C."/>
        </authorList>
    </citation>
    <scope>NUCLEOTIDE SEQUENCE [LARGE SCALE GENOMIC DNA]</scope>
</reference>
<sequence length="179" mass="19503">MMKDIIPASSWASEESTDLQNGSFPLSVAPRSEFPRRRALEDWLLSVFLADQAESEGQLVLERVRDTPPPVTSPRGDGICVSRGKAPSSPGGSTHAWLYLTRHFPWSPFPHGGWTDTSEPCVLETLGGSSLAALRGNSLWVQSSGACAFCVYESLIEQSLPNERFEELLLGPSPGEVMK</sequence>